<dbReference type="EC" id="3.1.3.71"/>
<dbReference type="EMBL" id="BA000022">
    <property type="protein sequence ID" value="BAA17908.1"/>
    <property type="molecule type" value="Genomic_DNA"/>
</dbReference>
<dbReference type="PIR" id="S75046">
    <property type="entry name" value="S75046"/>
</dbReference>
<dbReference type="SMR" id="P73849"/>
<dbReference type="FunCoup" id="P73849">
    <property type="interactions" value="92"/>
</dbReference>
<dbReference type="STRING" id="1148.gene:10498777"/>
<dbReference type="PaxDb" id="1148-1652991"/>
<dbReference type="EnsemblBacteria" id="BAA17908">
    <property type="protein sequence ID" value="BAA17908"/>
    <property type="gene ID" value="BAA17908"/>
</dbReference>
<dbReference type="KEGG" id="syn:slr1718"/>
<dbReference type="eggNOG" id="COG2045">
    <property type="taxonomic scope" value="Bacteria"/>
</dbReference>
<dbReference type="InParanoid" id="P73849"/>
<dbReference type="PhylomeDB" id="P73849"/>
<dbReference type="Proteomes" id="UP000001425">
    <property type="component" value="Chromosome"/>
</dbReference>
<dbReference type="GO" id="GO:0050532">
    <property type="term" value="F:2-phosphosulfolactate phosphatase activity"/>
    <property type="evidence" value="ECO:0007669"/>
    <property type="project" value="UniProtKB-UniRule"/>
</dbReference>
<dbReference type="GO" id="GO:0000287">
    <property type="term" value="F:magnesium ion binding"/>
    <property type="evidence" value="ECO:0007669"/>
    <property type="project" value="UniProtKB-UniRule"/>
</dbReference>
<dbReference type="GO" id="GO:0050545">
    <property type="term" value="F:sulfopyruvate decarboxylase activity"/>
    <property type="evidence" value="ECO:0000318"/>
    <property type="project" value="GO_Central"/>
</dbReference>
<dbReference type="FunFam" id="3.90.1560.10:FF:000001">
    <property type="entry name" value="Probable 2-phosphosulfolactate phosphatase"/>
    <property type="match status" value="1"/>
</dbReference>
<dbReference type="Gene3D" id="3.90.1560.10">
    <property type="entry name" value="ComB-like"/>
    <property type="match status" value="1"/>
</dbReference>
<dbReference type="HAMAP" id="MF_00490">
    <property type="entry name" value="ComB"/>
    <property type="match status" value="1"/>
</dbReference>
<dbReference type="InterPro" id="IPR005238">
    <property type="entry name" value="ComB-like"/>
</dbReference>
<dbReference type="InterPro" id="IPR036702">
    <property type="entry name" value="ComB-like_sf"/>
</dbReference>
<dbReference type="NCBIfam" id="NF002056">
    <property type="entry name" value="PRK00886.1-5"/>
    <property type="match status" value="1"/>
</dbReference>
<dbReference type="PANTHER" id="PTHR37311">
    <property type="entry name" value="2-PHOSPHOSULFOLACTATE PHOSPHATASE-RELATED"/>
    <property type="match status" value="1"/>
</dbReference>
<dbReference type="PANTHER" id="PTHR37311:SF1">
    <property type="entry name" value="2-PHOSPHOSULFOLACTATE PHOSPHATASE-RELATED"/>
    <property type="match status" value="1"/>
</dbReference>
<dbReference type="Pfam" id="PF04029">
    <property type="entry name" value="2-ph_phosp"/>
    <property type="match status" value="1"/>
</dbReference>
<dbReference type="SUPFAM" id="SSF142823">
    <property type="entry name" value="ComB-like"/>
    <property type="match status" value="1"/>
</dbReference>
<proteinExistence type="inferred from homology"/>
<sequence length="241" mass="26046">MEIFVYHTPELTPDQSLPDCAVVIDVLRATTTIATALKVGAEAVQVFSSLDDLMATSESWPGEKRLRAGERGGAAVAGYDLGNSPLDCTSELMAGKRLFLSTTNGTRALQRVKDCPQLVTASLVNRGAAVDYLAQTQPKTVWLLGSGWEGGYSLEDTVCAGAIASLLREKGIDFTVGNDEVVAAQSLYRQWRSDLLNLFKQASHGQRLLKLDRLEDLRYCATEDLIDILPKQVSPGVLTAA</sequence>
<feature type="chain" id="PRO_0000081476" description="Probable 2-phosphosulfolactate phosphatase">
    <location>
        <begin position="1"/>
        <end position="241"/>
    </location>
</feature>
<accession>P73849</accession>
<reference key="1">
    <citation type="journal article" date="1996" name="DNA Res.">
        <title>Sequence analysis of the genome of the unicellular cyanobacterium Synechocystis sp. strain PCC6803. II. Sequence determination of the entire genome and assignment of potential protein-coding regions.</title>
        <authorList>
            <person name="Kaneko T."/>
            <person name="Sato S."/>
            <person name="Kotani H."/>
            <person name="Tanaka A."/>
            <person name="Asamizu E."/>
            <person name="Nakamura Y."/>
            <person name="Miyajima N."/>
            <person name="Hirosawa M."/>
            <person name="Sugiura M."/>
            <person name="Sasamoto S."/>
            <person name="Kimura T."/>
            <person name="Hosouchi T."/>
            <person name="Matsuno A."/>
            <person name="Muraki A."/>
            <person name="Nakazaki N."/>
            <person name="Naruo K."/>
            <person name="Okumura S."/>
            <person name="Shimpo S."/>
            <person name="Takeuchi C."/>
            <person name="Wada T."/>
            <person name="Watanabe A."/>
            <person name="Yamada M."/>
            <person name="Yasuda M."/>
            <person name="Tabata S."/>
        </authorList>
    </citation>
    <scope>NUCLEOTIDE SEQUENCE [LARGE SCALE GENOMIC DNA]</scope>
    <source>
        <strain>ATCC 27184 / PCC 6803 / Kazusa</strain>
    </source>
</reference>
<protein>
    <recommendedName>
        <fullName>Probable 2-phosphosulfolactate phosphatase</fullName>
        <ecNumber>3.1.3.71</ecNumber>
    </recommendedName>
</protein>
<keyword id="KW-0378">Hydrolase</keyword>
<keyword id="KW-0460">Magnesium</keyword>
<keyword id="KW-1185">Reference proteome</keyword>
<name>COMB_SYNY3</name>
<gene>
    <name type="primary">comB</name>
    <name type="ordered locus">slr1718</name>
</gene>
<comment type="catalytic activity">
    <reaction>
        <text>(2R)-O-phospho-3-sulfolactate + H2O = (2R)-3-sulfolactate + phosphate</text>
        <dbReference type="Rhea" id="RHEA:23416"/>
        <dbReference type="ChEBI" id="CHEBI:15377"/>
        <dbReference type="ChEBI" id="CHEBI:15597"/>
        <dbReference type="ChEBI" id="CHEBI:43474"/>
        <dbReference type="ChEBI" id="CHEBI:58738"/>
        <dbReference type="EC" id="3.1.3.71"/>
    </reaction>
</comment>
<comment type="cofactor">
    <cofactor evidence="1">
        <name>Mg(2+)</name>
        <dbReference type="ChEBI" id="CHEBI:18420"/>
    </cofactor>
</comment>
<comment type="similarity">
    <text evidence="2">Belongs to the ComB family.</text>
</comment>
<organism>
    <name type="scientific">Synechocystis sp. (strain ATCC 27184 / PCC 6803 / Kazusa)</name>
    <dbReference type="NCBI Taxonomy" id="1111708"/>
    <lineage>
        <taxon>Bacteria</taxon>
        <taxon>Bacillati</taxon>
        <taxon>Cyanobacteriota</taxon>
        <taxon>Cyanophyceae</taxon>
        <taxon>Synechococcales</taxon>
        <taxon>Merismopediaceae</taxon>
        <taxon>Synechocystis</taxon>
    </lineage>
</organism>
<evidence type="ECO:0000250" key="1"/>
<evidence type="ECO:0000305" key="2"/>